<protein>
    <recommendedName>
        <fullName evidence="1">Serine--tRNA ligase</fullName>
        <ecNumber evidence="1">6.1.1.11</ecNumber>
    </recommendedName>
    <alternativeName>
        <fullName evidence="1">Seryl-tRNA synthetase</fullName>
        <shortName evidence="1">SerRS</shortName>
    </alternativeName>
    <alternativeName>
        <fullName evidence="1">Seryl-tRNA(Ser/Sec) synthetase</fullName>
    </alternativeName>
</protein>
<feature type="chain" id="PRO_1000098051" description="Serine--tRNA ligase">
    <location>
        <begin position="1"/>
        <end position="425"/>
    </location>
</feature>
<feature type="binding site" evidence="1">
    <location>
        <begin position="233"/>
        <end position="235"/>
    </location>
    <ligand>
        <name>L-serine</name>
        <dbReference type="ChEBI" id="CHEBI:33384"/>
    </ligand>
</feature>
<feature type="binding site" evidence="1">
    <location>
        <begin position="264"/>
        <end position="266"/>
    </location>
    <ligand>
        <name>ATP</name>
        <dbReference type="ChEBI" id="CHEBI:30616"/>
    </ligand>
</feature>
<feature type="binding site" evidence="1">
    <location>
        <position position="287"/>
    </location>
    <ligand>
        <name>L-serine</name>
        <dbReference type="ChEBI" id="CHEBI:33384"/>
    </ligand>
</feature>
<feature type="binding site" evidence="1">
    <location>
        <begin position="351"/>
        <end position="354"/>
    </location>
    <ligand>
        <name>ATP</name>
        <dbReference type="ChEBI" id="CHEBI:30616"/>
    </ligand>
</feature>
<feature type="binding site" evidence="1">
    <location>
        <position position="387"/>
    </location>
    <ligand>
        <name>L-serine</name>
        <dbReference type="ChEBI" id="CHEBI:33384"/>
    </ligand>
</feature>
<reference key="1">
    <citation type="submission" date="2008-05" db="EMBL/GenBank/DDBJ databases">
        <title>Complete genome sequence of Clostridium botulinum E3 str. Alaska E43.</title>
        <authorList>
            <person name="Brinkac L.M."/>
            <person name="Brown J.L."/>
            <person name="Bruce D."/>
            <person name="Detter C."/>
            <person name="Munk C."/>
            <person name="Smith L.A."/>
            <person name="Smith T.J."/>
            <person name="Sutton G."/>
            <person name="Brettin T.S."/>
        </authorList>
    </citation>
    <scope>NUCLEOTIDE SEQUENCE [LARGE SCALE GENOMIC DNA]</scope>
    <source>
        <strain>Alaska E43 / Type E3</strain>
    </source>
</reference>
<organism>
    <name type="scientific">Clostridium botulinum (strain Alaska E43 / Type E3)</name>
    <dbReference type="NCBI Taxonomy" id="508767"/>
    <lineage>
        <taxon>Bacteria</taxon>
        <taxon>Bacillati</taxon>
        <taxon>Bacillota</taxon>
        <taxon>Clostridia</taxon>
        <taxon>Eubacteriales</taxon>
        <taxon>Clostridiaceae</taxon>
        <taxon>Clostridium</taxon>
    </lineage>
</organism>
<name>SYS_CLOBA</name>
<sequence length="425" mass="48591">MLDLKRIRNNPEEIKKLLSNRGEDFDVAVIDEIVTLDEERRKILVEVESLKGKRNQVSAEIPKLKKAGEDVTQIMNDMRKLGEEIKNFDTRVNEINERIEYIMLRIPNIPNPEVPDGETDEDNVEIKKWGEPTKFTFEPKAHWDLGTDLNILDFERGGKVAGSRFTVYKGLGARLERSIINYFLDKHTTENGYTEILPPYMVNRDSMTGTGQLPKFEEDAFKVENNGYFLIPTAEVPVTNMYRNEVLSGDILPIKHAAYSACFRAEAGSAGRDTRGLVRQHQFNKVELVKFCKPEDSYAELDKLVEDAESVLQGLGLPYRIVRICKGDLGFTAALKYDIEVWMPSYNRYVEISSCSNFEDFQARRANIKYRETPKDKPKFIHTLNGSGVAIGRTVAAVLENYQKEDGTVEIPEAIKRFMNVDFIK</sequence>
<keyword id="KW-0030">Aminoacyl-tRNA synthetase</keyword>
<keyword id="KW-0067">ATP-binding</keyword>
<keyword id="KW-0963">Cytoplasm</keyword>
<keyword id="KW-0436">Ligase</keyword>
<keyword id="KW-0547">Nucleotide-binding</keyword>
<keyword id="KW-0648">Protein biosynthesis</keyword>
<evidence type="ECO:0000255" key="1">
    <source>
        <dbReference type="HAMAP-Rule" id="MF_00176"/>
    </source>
</evidence>
<proteinExistence type="inferred from homology"/>
<dbReference type="EC" id="6.1.1.11" evidence="1"/>
<dbReference type="EMBL" id="CP001078">
    <property type="protein sequence ID" value="ACD51881.1"/>
    <property type="molecule type" value="Genomic_DNA"/>
</dbReference>
<dbReference type="RefSeq" id="WP_012450147.1">
    <property type="nucleotide sequence ID" value="NC_010723.1"/>
</dbReference>
<dbReference type="SMR" id="B2UX54"/>
<dbReference type="KEGG" id="cbt:CLH_0018"/>
<dbReference type="HOGENOM" id="CLU_023797_1_1_9"/>
<dbReference type="UniPathway" id="UPA00906">
    <property type="reaction ID" value="UER00895"/>
</dbReference>
<dbReference type="GO" id="GO:0005737">
    <property type="term" value="C:cytoplasm"/>
    <property type="evidence" value="ECO:0007669"/>
    <property type="project" value="UniProtKB-SubCell"/>
</dbReference>
<dbReference type="GO" id="GO:0005524">
    <property type="term" value="F:ATP binding"/>
    <property type="evidence" value="ECO:0007669"/>
    <property type="project" value="UniProtKB-UniRule"/>
</dbReference>
<dbReference type="GO" id="GO:0140096">
    <property type="term" value="F:catalytic activity, acting on a protein"/>
    <property type="evidence" value="ECO:0007669"/>
    <property type="project" value="UniProtKB-ARBA"/>
</dbReference>
<dbReference type="GO" id="GO:0004828">
    <property type="term" value="F:serine-tRNA ligase activity"/>
    <property type="evidence" value="ECO:0007669"/>
    <property type="project" value="UniProtKB-UniRule"/>
</dbReference>
<dbReference type="GO" id="GO:0016740">
    <property type="term" value="F:transferase activity"/>
    <property type="evidence" value="ECO:0007669"/>
    <property type="project" value="UniProtKB-ARBA"/>
</dbReference>
<dbReference type="GO" id="GO:0016260">
    <property type="term" value="P:selenocysteine biosynthetic process"/>
    <property type="evidence" value="ECO:0007669"/>
    <property type="project" value="UniProtKB-UniRule"/>
</dbReference>
<dbReference type="GO" id="GO:0006434">
    <property type="term" value="P:seryl-tRNA aminoacylation"/>
    <property type="evidence" value="ECO:0007669"/>
    <property type="project" value="UniProtKB-UniRule"/>
</dbReference>
<dbReference type="CDD" id="cd00770">
    <property type="entry name" value="SerRS_core"/>
    <property type="match status" value="1"/>
</dbReference>
<dbReference type="Gene3D" id="3.30.930.10">
    <property type="entry name" value="Bira Bifunctional Protein, Domain 2"/>
    <property type="match status" value="1"/>
</dbReference>
<dbReference type="Gene3D" id="1.10.287.40">
    <property type="entry name" value="Serine-tRNA synthetase, tRNA binding domain"/>
    <property type="match status" value="1"/>
</dbReference>
<dbReference type="HAMAP" id="MF_00176">
    <property type="entry name" value="Ser_tRNA_synth_type1"/>
    <property type="match status" value="1"/>
</dbReference>
<dbReference type="InterPro" id="IPR002314">
    <property type="entry name" value="aa-tRNA-synt_IIb"/>
</dbReference>
<dbReference type="InterPro" id="IPR006195">
    <property type="entry name" value="aa-tRNA-synth_II"/>
</dbReference>
<dbReference type="InterPro" id="IPR045864">
    <property type="entry name" value="aa-tRNA-synth_II/BPL/LPL"/>
</dbReference>
<dbReference type="InterPro" id="IPR002317">
    <property type="entry name" value="Ser-tRNA-ligase_type_1"/>
</dbReference>
<dbReference type="InterPro" id="IPR015866">
    <property type="entry name" value="Ser-tRNA-synth_1_N"/>
</dbReference>
<dbReference type="InterPro" id="IPR042103">
    <property type="entry name" value="SerRS_1_N_sf"/>
</dbReference>
<dbReference type="InterPro" id="IPR033729">
    <property type="entry name" value="SerRS_core"/>
</dbReference>
<dbReference type="InterPro" id="IPR010978">
    <property type="entry name" value="tRNA-bd_arm"/>
</dbReference>
<dbReference type="NCBIfam" id="TIGR00414">
    <property type="entry name" value="serS"/>
    <property type="match status" value="1"/>
</dbReference>
<dbReference type="PANTHER" id="PTHR43697:SF1">
    <property type="entry name" value="SERINE--TRNA LIGASE"/>
    <property type="match status" value="1"/>
</dbReference>
<dbReference type="PANTHER" id="PTHR43697">
    <property type="entry name" value="SERYL-TRNA SYNTHETASE"/>
    <property type="match status" value="1"/>
</dbReference>
<dbReference type="Pfam" id="PF02403">
    <property type="entry name" value="Seryl_tRNA_N"/>
    <property type="match status" value="1"/>
</dbReference>
<dbReference type="Pfam" id="PF00587">
    <property type="entry name" value="tRNA-synt_2b"/>
    <property type="match status" value="1"/>
</dbReference>
<dbReference type="PIRSF" id="PIRSF001529">
    <property type="entry name" value="Ser-tRNA-synth_IIa"/>
    <property type="match status" value="1"/>
</dbReference>
<dbReference type="PRINTS" id="PR00981">
    <property type="entry name" value="TRNASYNTHSER"/>
</dbReference>
<dbReference type="SUPFAM" id="SSF55681">
    <property type="entry name" value="Class II aaRS and biotin synthetases"/>
    <property type="match status" value="1"/>
</dbReference>
<dbReference type="SUPFAM" id="SSF46589">
    <property type="entry name" value="tRNA-binding arm"/>
    <property type="match status" value="1"/>
</dbReference>
<dbReference type="PROSITE" id="PS50862">
    <property type="entry name" value="AA_TRNA_LIGASE_II"/>
    <property type="match status" value="1"/>
</dbReference>
<comment type="function">
    <text evidence="1">Catalyzes the attachment of serine to tRNA(Ser). Is also able to aminoacylate tRNA(Sec) with serine, to form the misacylated tRNA L-seryl-tRNA(Sec), which will be further converted into selenocysteinyl-tRNA(Sec).</text>
</comment>
<comment type="catalytic activity">
    <reaction evidence="1">
        <text>tRNA(Ser) + L-serine + ATP = L-seryl-tRNA(Ser) + AMP + diphosphate + H(+)</text>
        <dbReference type="Rhea" id="RHEA:12292"/>
        <dbReference type="Rhea" id="RHEA-COMP:9669"/>
        <dbReference type="Rhea" id="RHEA-COMP:9703"/>
        <dbReference type="ChEBI" id="CHEBI:15378"/>
        <dbReference type="ChEBI" id="CHEBI:30616"/>
        <dbReference type="ChEBI" id="CHEBI:33019"/>
        <dbReference type="ChEBI" id="CHEBI:33384"/>
        <dbReference type="ChEBI" id="CHEBI:78442"/>
        <dbReference type="ChEBI" id="CHEBI:78533"/>
        <dbReference type="ChEBI" id="CHEBI:456215"/>
        <dbReference type="EC" id="6.1.1.11"/>
    </reaction>
</comment>
<comment type="catalytic activity">
    <reaction evidence="1">
        <text>tRNA(Sec) + L-serine + ATP = L-seryl-tRNA(Sec) + AMP + diphosphate + H(+)</text>
        <dbReference type="Rhea" id="RHEA:42580"/>
        <dbReference type="Rhea" id="RHEA-COMP:9742"/>
        <dbReference type="Rhea" id="RHEA-COMP:10128"/>
        <dbReference type="ChEBI" id="CHEBI:15378"/>
        <dbReference type="ChEBI" id="CHEBI:30616"/>
        <dbReference type="ChEBI" id="CHEBI:33019"/>
        <dbReference type="ChEBI" id="CHEBI:33384"/>
        <dbReference type="ChEBI" id="CHEBI:78442"/>
        <dbReference type="ChEBI" id="CHEBI:78533"/>
        <dbReference type="ChEBI" id="CHEBI:456215"/>
        <dbReference type="EC" id="6.1.1.11"/>
    </reaction>
</comment>
<comment type="pathway">
    <text evidence="1">Aminoacyl-tRNA biosynthesis; selenocysteinyl-tRNA(Sec) biosynthesis; L-seryl-tRNA(Sec) from L-serine and tRNA(Sec): step 1/1.</text>
</comment>
<comment type="subunit">
    <text evidence="1">Homodimer. The tRNA molecule binds across the dimer.</text>
</comment>
<comment type="subcellular location">
    <subcellularLocation>
        <location evidence="1">Cytoplasm</location>
    </subcellularLocation>
</comment>
<comment type="domain">
    <text evidence="1">Consists of two distinct domains, a catalytic core and a N-terminal extension that is involved in tRNA binding.</text>
</comment>
<comment type="similarity">
    <text evidence="1">Belongs to the class-II aminoacyl-tRNA synthetase family. Type-1 seryl-tRNA synthetase subfamily.</text>
</comment>
<accession>B2UX54</accession>
<gene>
    <name evidence="1" type="primary">serS</name>
    <name type="ordered locus">CLH_0018</name>
</gene>